<name>Y4380_XANOP</name>
<gene>
    <name type="ordered locus">PXO_04380</name>
</gene>
<feature type="chain" id="PRO_1000091273" description="UPF0102 protein PXO_04380">
    <location>
        <begin position="1"/>
        <end position="122"/>
    </location>
</feature>
<evidence type="ECO:0000255" key="1">
    <source>
        <dbReference type="HAMAP-Rule" id="MF_00048"/>
    </source>
</evidence>
<accession>B2SNY1</accession>
<sequence>MPAARQQRGAGVEAAARALLEQAGLRLVVGNANYRGGELDLVMRDGQSLVFVEVRYRRDDRFGGGAASVDWRKRRKLVLAAQLFLGAHPALAALPCRFDVVDASGEPPVLHWIRDAFRADDC</sequence>
<comment type="similarity">
    <text evidence="1">Belongs to the UPF0102 family.</text>
</comment>
<dbReference type="EMBL" id="CP000967">
    <property type="protein sequence ID" value="ACD57682.1"/>
    <property type="molecule type" value="Genomic_DNA"/>
</dbReference>
<dbReference type="RefSeq" id="WP_011409386.1">
    <property type="nucleotide sequence ID" value="NC_010717.2"/>
</dbReference>
<dbReference type="SMR" id="B2SNY1"/>
<dbReference type="KEGG" id="xop:PXO_04380"/>
<dbReference type="eggNOG" id="COG0792">
    <property type="taxonomic scope" value="Bacteria"/>
</dbReference>
<dbReference type="HOGENOM" id="CLU_115353_1_0_6"/>
<dbReference type="Proteomes" id="UP000001740">
    <property type="component" value="Chromosome"/>
</dbReference>
<dbReference type="GO" id="GO:0003676">
    <property type="term" value="F:nucleic acid binding"/>
    <property type="evidence" value="ECO:0007669"/>
    <property type="project" value="InterPro"/>
</dbReference>
<dbReference type="Gene3D" id="3.40.1350.10">
    <property type="match status" value="1"/>
</dbReference>
<dbReference type="HAMAP" id="MF_00048">
    <property type="entry name" value="UPF0102"/>
    <property type="match status" value="1"/>
</dbReference>
<dbReference type="InterPro" id="IPR011335">
    <property type="entry name" value="Restrct_endonuc-II-like"/>
</dbReference>
<dbReference type="InterPro" id="IPR011856">
    <property type="entry name" value="tRNA_endonuc-like_dom_sf"/>
</dbReference>
<dbReference type="InterPro" id="IPR003509">
    <property type="entry name" value="UPF0102_YraN-like"/>
</dbReference>
<dbReference type="NCBIfam" id="NF009150">
    <property type="entry name" value="PRK12497.1-3"/>
    <property type="match status" value="1"/>
</dbReference>
<dbReference type="NCBIfam" id="TIGR00252">
    <property type="entry name" value="YraN family protein"/>
    <property type="match status" value="1"/>
</dbReference>
<dbReference type="PANTHER" id="PTHR34039">
    <property type="entry name" value="UPF0102 PROTEIN YRAN"/>
    <property type="match status" value="1"/>
</dbReference>
<dbReference type="PANTHER" id="PTHR34039:SF1">
    <property type="entry name" value="UPF0102 PROTEIN YRAN"/>
    <property type="match status" value="1"/>
</dbReference>
<dbReference type="Pfam" id="PF02021">
    <property type="entry name" value="UPF0102"/>
    <property type="match status" value="1"/>
</dbReference>
<dbReference type="SUPFAM" id="SSF52980">
    <property type="entry name" value="Restriction endonuclease-like"/>
    <property type="match status" value="1"/>
</dbReference>
<organism>
    <name type="scientific">Xanthomonas oryzae pv. oryzae (strain PXO99A)</name>
    <dbReference type="NCBI Taxonomy" id="360094"/>
    <lineage>
        <taxon>Bacteria</taxon>
        <taxon>Pseudomonadati</taxon>
        <taxon>Pseudomonadota</taxon>
        <taxon>Gammaproteobacteria</taxon>
        <taxon>Lysobacterales</taxon>
        <taxon>Lysobacteraceae</taxon>
        <taxon>Xanthomonas</taxon>
    </lineage>
</organism>
<reference key="1">
    <citation type="journal article" date="2008" name="BMC Genomics">
        <title>Genome sequence and rapid evolution of the rice pathogen Xanthomonas oryzae pv. oryzae PXO99A.</title>
        <authorList>
            <person name="Salzberg S.L."/>
            <person name="Sommer D.D."/>
            <person name="Schatz M.C."/>
            <person name="Phillippy A.M."/>
            <person name="Rabinowicz P.D."/>
            <person name="Tsuge S."/>
            <person name="Furutani A."/>
            <person name="Ochiai H."/>
            <person name="Delcher A.L."/>
            <person name="Kelley D."/>
            <person name="Madupu R."/>
            <person name="Puiu D."/>
            <person name="Radune D."/>
            <person name="Shumway M."/>
            <person name="Trapnell C."/>
            <person name="Aparna G."/>
            <person name="Jha G."/>
            <person name="Pandey A."/>
            <person name="Patil P.B."/>
            <person name="Ishihara H."/>
            <person name="Meyer D.F."/>
            <person name="Szurek B."/>
            <person name="Verdier V."/>
            <person name="Koebnik R."/>
            <person name="Dow J.M."/>
            <person name="Ryan R.P."/>
            <person name="Hirata H."/>
            <person name="Tsuyumu S."/>
            <person name="Won Lee S."/>
            <person name="Seo Y.-S."/>
            <person name="Sriariyanum M."/>
            <person name="Ronald P.C."/>
            <person name="Sonti R.V."/>
            <person name="Van Sluys M.-A."/>
            <person name="Leach J.E."/>
            <person name="White F.F."/>
            <person name="Bogdanove A.J."/>
        </authorList>
    </citation>
    <scope>NUCLEOTIDE SEQUENCE [LARGE SCALE GENOMIC DNA]</scope>
    <source>
        <strain>PXO99A</strain>
    </source>
</reference>
<protein>
    <recommendedName>
        <fullName evidence="1">UPF0102 protein PXO_04380</fullName>
    </recommendedName>
</protein>
<proteinExistence type="inferred from homology"/>